<comment type="function">
    <text evidence="2">NF-kappa-B is a pleiotropic transcription factor present in almost all cell types and is the endpoint of a series of signal transduction events that are initiated by a vast array of stimuli related to many biological processes such as inflammation, immunity, differentiation, cell growth, tumorigenesis and apoptosis. NF-kappa-B is a homo- or heterodimeric complex formed by the Rel-like domain-containing proteins RELA/p65, RELB, NFKB1/p105, NFKB1/p50, REL and NFKB2/p52. The heterodimeric RELA-NFKB1 complex appears to be most abundant one. The dimers bind at kappa-B sites in the DNA of their target genes and the individual dimers have distinct preferences for different kappa-B sites that they can bind with distinguishable affinity and specificity. Different dimer combinations act as transcriptional activators or repressors, respectively. The NF-kappa-B heterodimeric RELA-NFKB1 and RELA-REL complexes, for instance, function as transcriptional activators. NF-kappa-B is controlled by various mechanisms of post-translational modification and subcellular compartmentalization as well as by interactions with other cofactors or corepressors. NF-kappa-B complexes are held in the cytoplasm in an inactive state complexed with members of the NF-kappa-B inhibitor (I-kappa-B) family. In a conventional activation pathway, I-kappa-B is phosphorylated by I-kappa-B kinases (IKKs) in response to different activators, subsequently degraded thus liberating the active NF-kappa-B complex which translocates to the nucleus. The inhibitory effect of I-kappa-B on NF-kappa-B through retention in the cytoplasm is exerted primarily through the interaction with RELA. RELA shows a weak DNA-binding site which could contribute directly to DNA binding in the NF-kappa-B complex. Besides its activity as a direct transcriptional activator, it is also able to modulate promoters accessibility to transcription factors and thereby indirectly regulate gene expression. Associates with chromatin at the NF-kappa-B promoter region via association with DDX1. Essential for cytokine gene expression in T-cells. The NF-kappa-B homodimeric RELA-RELA complex appears to be involved in invasin-mediated activation of IL-8 expression. Key transcription factor regulating the IFN response during SARS-CoV-2 infection.</text>
</comment>
<comment type="subunit">
    <text evidence="2 3 6">Component of the NF-kappa-B p65-p50 complex. Component of the NF-kappa-B p65-c-Rel complex. Homodimer; component of the NF-kappa-B p65-p65 complex. Component of the NF-kappa-B p65-p52 complex. May interact with ETHE1. Binds TLE5 and TLE1. Interacts with TP53BP2. Binds to and is phosphorylated by the activated form of either RPS6KA4 or RPS6KA5. Interacts with ING4 and this interaction may be indirect. Interacts with CARM1, USP48 and UNC5CL. Interacts with IRAK1BP1 (By similarity). Interacts with NFKBID (By similarity). Interacts with NFKBIA (By similarity). Interacts with GSK3B. Interacts with NFKBIB (By similarity). Interacts with NFKBIE. Interacts with NFKBIZ. Interacts with EHMT1 (via ANK repeats) (By similarity). Part of a 70-90 kDa complex at least consisting of CHUK, IKBKB, NFKBIA, RELA, ELP1 and MAP3K14. Interacts with HDAC3; HDAC3 mediates the deacetylation of RELA. Interacts with HDAC1; the interaction requires non-phosphorylated RELA. Interacts with CBP; the interaction requires phosphorylated RELA. Interacts (phosphorylated at 'Thr-254') with PIN1; the interaction inhibits p65 binding to NFKBIA. Interacts with SOCS1. Interacts with UXT. Interacts with MTDH and PHF11. Interacts with ARRB2. Interacts with NFKBIA (when phosphorylated), the interaction is direct; phosphorylated NFKBIA is part of a SCF(BTRC)-like complex lacking CUL1. Interacts with RNF25. Interacts (via C-terminus) with DDX1. Interacts with UFL1 and COMMD1. Interacts with BRMS1; this promotes deacetylation of 'Lys-310'. Interacts with NOTCH2 (By similarity). Directly interacts with MEN1; this interaction represses NFKB-mediated transactivation. Interacts with AKIP1, which promotes the phosphorylation and nuclear retention of RELA. Interacts (via the RHD) with GFI1; the interaction, after bacterial lipopolysaccharide (LPS) stimulation, inhibits the transcriptional activity by interfering with the DNA-binding activity to target gene promoter DNA. Interacts (when acetylated at Lys-310) with BRD4; leading to activation of the NF-kappa-B pathway. Interacts with MEFV. Interacts with CLOCK (By similarity). Interacts (via N-terminus) with CPEN1; this interaction induces proteolytic cleavage of p65/RELA subunit and inhibition of NF-kappa-B transcriptional activity. Interacts with FOXP3. Interacts with CDK5RAP3; stimulates the interaction of RELA with HDAC1, HDAC2 and HDAC3 thereby inhibiting NF-kappa-B transcriptional activity. Interacts with DHX9; this interaction is direct and activates NF-kappa-B-mediated transcription. Interacts with LRRC25 (By similarity). Interacts with TBX21 (By similarity). Interacts with KAT2A (By similarity). Interacts with ZBTB7A; involved in the control by RELA of the accessibility of target gene promoters. Directly interacts with DDX3X; this interaction may trap RELA in the cytoplasm, impairing nuclear relocalization upon TNF activating signals (By similarity). Interacts with PHF2 (By similarity). Interacts with MKRN2; the interaction leads to its polyubiquitination and proteasome-dependent degradation (By similarity). Interacts with ECSIT (By similarity). Interacts with RAB28; the interaction contributes to RELA transport from cytoplasm to nucleus (PubMed:23457503).</text>
</comment>
<comment type="interaction">
    <interactant intactId="EBI-1187180">
        <id>Q7TQN4</id>
    </interactant>
    <interactant intactId="EBI-15919967">
        <id>Q06518</id>
        <label>Nos2</label>
    </interactant>
    <organismsDiffer>false</organismsDiffer>
    <experiments>3</experiments>
</comment>
<comment type="subcellular location">
    <subcellularLocation>
        <location evidence="6">Nucleus</location>
    </subcellularLocation>
    <subcellularLocation>
        <location evidence="6">Cytoplasm</location>
    </subcellularLocation>
    <text evidence="2">Nuclear, but also found in the cytoplasm in an inactive form complexed to an inhibitor (I-kappa-B). Colocalized with DDX1 in the nucleus upon TNF-alpha induction. Colocalizes with GFI1 in the nucleus after LPS stimulation. Translocation to the nucleus is impaired in L.monocytogenes infection.</text>
</comment>
<comment type="domain">
    <text evidence="3">The transcriptional activation domain 3/TA3 does not participate in the direct transcriptional activity of RELA but is involved in the control by RELA of the accessibility of target gene promoters. Mediates interaction with ZBTB7A.</text>
</comment>
<comment type="domain">
    <text evidence="2 3">The transcriptional activation domain 1/TA1 and the transcriptional activation domain 2/TA2 have direct transcriptional activation properties (By similarity). The 9aaTAD motif found within the transcriptional activation domain 2 is a conserved motif present in a large number of transcription factors that is required for their transcriptional transactivation activity (By similarity).</text>
</comment>
<comment type="PTM">
    <text evidence="2">Ubiquitinated by RNF182, leading to its proteasomal degradation. Degradation is required for termination of NF-kappa-B response. Polyubiquitinated via 'Lys-29'-linked ubiquitin; leading to lysosomal degradation.</text>
</comment>
<comment type="PTM">
    <text evidence="2 3">Monomethylated at Lys-310 by SETD6 (By similarity). Monomethylation at Lys-310 is recognized by the ANK repeats of EHMT1 and promotes the formation of repressed chromatin at target genes, leading to down-regulation of NF-kappa-B transcription factor activity. Phosphorylation at Ser-311 disrupts the interaction with EHMT1 without preventing monomethylation at Lys-310 and relieves the repression of target genes (By similarity).</text>
</comment>
<comment type="PTM">
    <text evidence="1 2">Phosphorylation at Ser-311 disrupts the interaction with EHMT1 and promotes transcription factor activity (By similarity). Phosphorylation on Ser-535 stimulates acetylation on Lys-310 and interaction with CBP; the phosphorylated and acetylated forms show enhanced transcriptional activity. Phosphorylation at Ser-276 by RPS6KA4 and RPS6KA5 promotes its transactivation and transcriptional activities (By similarity).</text>
</comment>
<comment type="PTM">
    <text evidence="2">Phosphorylation at Ser-75 by herpes simplex virus 1/HHV-1 inhibits NF-kappa-B activation.</text>
</comment>
<comment type="PTM">
    <text evidence="2">Reversibly acetylated; the acetylation seems to be mediated by CBP, the deacetylation by HDAC3 and SIRT2. Acetylation at Lys-122 enhances DNA binding and impairs association with NFKBIA. Acetylation at Lys-310 is required for full transcriptional activity in the absence of effects on DNA binding and NFKBIA association. Acetylation at Lys-310 promotes interaction with BRD4. Acetylation can also lower DNA-binding and results in nuclear export. Interaction with BRMS1 promotes deacetylation of Lys-310. Lys-310 is deacetylated by SIRT2.</text>
</comment>
<comment type="PTM">
    <text evidence="1">S-nitrosylation of Cys-38 inactivates the enzyme activity.</text>
</comment>
<comment type="PTM">
    <text evidence="1">Sulfhydration at Cys-38 mediates the anti-apoptotic activity by promoting the interaction with RPS3 and activating the transcription factor activity.</text>
</comment>
<comment type="PTM">
    <text evidence="2">Sumoylation by PIAS3 negatively regulates DNA-bound activated NF-kappa-B.</text>
</comment>
<comment type="PTM">
    <text evidence="2">Proteolytically cleaved within a conserved N-terminus region required for base-specific contact with DNA in a CPEN1-mediated manner, and hence inhibits NF-kappa-B transcriptional activity.</text>
</comment>
<gene>
    <name evidence="7" type="primary">Rela</name>
    <name type="synonym">nos2</name>
</gene>
<proteinExistence type="evidence at protein level"/>
<feature type="chain" id="PRO_0000462301" description="Transcription factor p65">
    <location>
        <begin position="1"/>
        <end position="550"/>
    </location>
</feature>
<feature type="domain" description="RHD" evidence="5">
    <location>
        <begin position="16"/>
        <end position="190"/>
    </location>
</feature>
<feature type="region of interest" description="Transcriptional activation domain 3" evidence="3">
    <location>
        <begin position="342"/>
        <end position="388"/>
    </location>
</feature>
<feature type="region of interest" description="Transcriptional activation domain 1" evidence="2">
    <location>
        <begin position="414"/>
        <end position="476"/>
    </location>
</feature>
<feature type="region of interest" description="Transcriptional activation domain 2" evidence="3">
    <location>
        <begin position="520"/>
        <end position="550"/>
    </location>
</feature>
<feature type="short sequence motif" description="Nuclear localization signal" evidence="4">
    <location>
        <begin position="301"/>
        <end position="304"/>
    </location>
</feature>
<feature type="short sequence motif" description="9aaTAD" evidence="4">
    <location>
        <begin position="535"/>
        <end position="543"/>
    </location>
</feature>
<feature type="modified residue" description="N-acetylmethionine" evidence="2">
    <location>
        <position position="1"/>
    </location>
</feature>
<feature type="modified residue" description="Cysteine persulfide; alternate" evidence="1">
    <location>
        <position position="38"/>
    </location>
</feature>
<feature type="modified residue" description="S-nitrosocysteine; alternate" evidence="3">
    <location>
        <position position="38"/>
    </location>
</feature>
<feature type="modified residue" description="N6-acetyllysine" evidence="2">
    <location>
        <position position="122"/>
    </location>
</feature>
<feature type="modified residue" description="N6-acetyllysine" evidence="2">
    <location>
        <position position="123"/>
    </location>
</feature>
<feature type="modified residue" description="N6-acetyllysine" evidence="2">
    <location>
        <position position="218"/>
    </location>
</feature>
<feature type="modified residue" description="N6-acetyllysine" evidence="2">
    <location>
        <position position="221"/>
    </location>
</feature>
<feature type="modified residue" description="Phosphothreonine" evidence="2">
    <location>
        <position position="254"/>
    </location>
</feature>
<feature type="modified residue" description="Phosphoserine" evidence="2">
    <location>
        <position position="276"/>
    </location>
</feature>
<feature type="modified residue" description="Phosphoserine" evidence="2">
    <location>
        <position position="281"/>
    </location>
</feature>
<feature type="modified residue" description="N6-acetyllysine; alternate" evidence="2">
    <location>
        <position position="310"/>
    </location>
</feature>
<feature type="modified residue" description="N6-methyllysine" evidence="3">
    <location>
        <position position="310"/>
    </location>
</feature>
<feature type="modified residue" description="Phosphoserine" evidence="3">
    <location>
        <position position="311"/>
    </location>
</feature>
<feature type="modified residue" description="Phosphothreonine" evidence="2">
    <location>
        <position position="434"/>
    </location>
</feature>
<feature type="modified residue" description="Phosphoserine" evidence="2">
    <location>
        <position position="468"/>
    </location>
</feature>
<feature type="modified residue" description="Phosphothreonine" evidence="2">
    <location>
        <position position="505"/>
    </location>
</feature>
<feature type="modified residue" description="Phosphoserine" evidence="2">
    <location>
        <position position="535"/>
    </location>
</feature>
<feature type="cross-link" description="Glycyl lysine isopeptide (Lys-Gly) (interchain with G-Cter in SUMO3)" evidence="2">
    <location>
        <position position="37"/>
    </location>
</feature>
<feature type="cross-link" description="Glycyl lysine isopeptide (Lys-Gly) (interchain with G-Cter in SUMO3); alternate" evidence="2">
    <location>
        <position position="122"/>
    </location>
</feature>
<feature type="cross-link" description="Glycyl lysine isopeptide (Lys-Gly) (interchain with G-Cter in SUMO3); alternate" evidence="2">
    <location>
        <position position="123"/>
    </location>
</feature>
<sequence>MDDLFPLIFPSEPAQASGPYVEIIEQPKQRGMRFRYKCEGRSAGSIPGERSTDTTKTHPTIKINGYTGPGTVRISLVTKDPPHRPHPHELVGKDCRDGFYEAELCPDRCIHSFQNLGIQCVKKRDLEQAISQRIQTNNNPFQVPIEEQRGDYDLNAVRLCFQVTVRDPSGRPLRLTPVLSHPIFDNRAPNTAELKICRVNRNSGSCLGGDEIFLLCDKVQKEDIEVYFTGPGWEARGSFSQADVHRQVAIVFRTPPYADPSLQAPVRVSMQLRRPSDRELSEPMEFQYLPDTDDRHRIEEKRKRTYETFKSIMKKSPFNGPTEPRPPPRRIAVPSRGPTSVPKPAPQPYAFSTSLSTINFDEFSPMVLPPGQISNQALALAPSSAPVLAQTMVPSSAMVPSLAQPPAPVPVLAPGPPQSLSAPVPKSTQAGEGTLSEALLHLQFDADEDLGALLGNNTDPGVFTDLASVDNSEFQQLLNQGVAMSHSTAEPMLMEYPEAITRLVTGSQRPPDPAPATLGTSGLPNGLSGDEDFSSIADMDFSALLSQISS</sequence>
<organism>
    <name type="scientific">Rattus norvegicus</name>
    <name type="common">Rat</name>
    <dbReference type="NCBI Taxonomy" id="10116"/>
    <lineage>
        <taxon>Eukaryota</taxon>
        <taxon>Metazoa</taxon>
        <taxon>Chordata</taxon>
        <taxon>Craniata</taxon>
        <taxon>Vertebrata</taxon>
        <taxon>Euteleostomi</taxon>
        <taxon>Mammalia</taxon>
        <taxon>Eutheria</taxon>
        <taxon>Euarchontoglires</taxon>
        <taxon>Glires</taxon>
        <taxon>Rodentia</taxon>
        <taxon>Myomorpha</taxon>
        <taxon>Muroidea</taxon>
        <taxon>Muridae</taxon>
        <taxon>Murinae</taxon>
        <taxon>Rattus</taxon>
    </lineage>
</organism>
<reference key="1">
    <citation type="submission" date="2018-02" db="EMBL/GenBank/DDBJ databases">
        <title>Involvement of nuclear factor-kappaB in inducible nitric oxide synthase expression.</title>
        <authorList>
            <person name="Nishizawa M."/>
            <person name="Okuyama T."/>
        </authorList>
    </citation>
    <scope>NUCLEOTIDE SEQUENCE [MRNA]</scope>
    <source>
        <strain>Wistar</strain>
    </source>
</reference>
<reference key="2">
    <citation type="journal article" date="2004" name="Nature">
        <title>Genome sequence of the Brown Norway rat yields insights into mammalian evolution.</title>
        <authorList>
            <person name="Gibbs R.A."/>
            <person name="Weinstock G.M."/>
            <person name="Metzker M.L."/>
            <person name="Muzny D.M."/>
            <person name="Sodergren E.J."/>
            <person name="Scherer S."/>
            <person name="Scott G."/>
            <person name="Steffen D."/>
            <person name="Worley K.C."/>
            <person name="Burch P.E."/>
            <person name="Okwuonu G."/>
            <person name="Hines S."/>
            <person name="Lewis L."/>
            <person name="Deramo C."/>
            <person name="Delgado O."/>
            <person name="Dugan-Rocha S."/>
            <person name="Miner G."/>
            <person name="Morgan M."/>
            <person name="Hawes A."/>
            <person name="Gill R."/>
            <person name="Holt R.A."/>
            <person name="Adams M.D."/>
            <person name="Amanatides P.G."/>
            <person name="Baden-Tillson H."/>
            <person name="Barnstead M."/>
            <person name="Chin S."/>
            <person name="Evans C.A."/>
            <person name="Ferriera S."/>
            <person name="Fosler C."/>
            <person name="Glodek A."/>
            <person name="Gu Z."/>
            <person name="Jennings D."/>
            <person name="Kraft C.L."/>
            <person name="Nguyen T."/>
            <person name="Pfannkoch C.M."/>
            <person name="Sitter C."/>
            <person name="Sutton G.G."/>
            <person name="Venter J.C."/>
            <person name="Woodage T."/>
            <person name="Smith D."/>
            <person name="Lee H.-M."/>
            <person name="Gustafson E."/>
            <person name="Cahill P."/>
            <person name="Kana A."/>
            <person name="Doucette-Stamm L."/>
            <person name="Weinstock K."/>
            <person name="Fechtel K."/>
            <person name="Weiss R.B."/>
            <person name="Dunn D.M."/>
            <person name="Green E.D."/>
            <person name="Blakesley R.W."/>
            <person name="Bouffard G.G."/>
            <person name="De Jong P.J."/>
            <person name="Osoegawa K."/>
            <person name="Zhu B."/>
            <person name="Marra M."/>
            <person name="Schein J."/>
            <person name="Bosdet I."/>
            <person name="Fjell C."/>
            <person name="Jones S."/>
            <person name="Krzywinski M."/>
            <person name="Mathewson C."/>
            <person name="Siddiqui A."/>
            <person name="Wye N."/>
            <person name="McPherson J."/>
            <person name="Zhao S."/>
            <person name="Fraser C.M."/>
            <person name="Shetty J."/>
            <person name="Shatsman S."/>
            <person name="Geer K."/>
            <person name="Chen Y."/>
            <person name="Abramzon S."/>
            <person name="Nierman W.C."/>
            <person name="Havlak P.H."/>
            <person name="Chen R."/>
            <person name="Durbin K.J."/>
            <person name="Egan A."/>
            <person name="Ren Y."/>
            <person name="Song X.-Z."/>
            <person name="Li B."/>
            <person name="Liu Y."/>
            <person name="Qin X."/>
            <person name="Cawley S."/>
            <person name="Cooney A.J."/>
            <person name="D'Souza L.M."/>
            <person name="Martin K."/>
            <person name="Wu J.Q."/>
            <person name="Gonzalez-Garay M.L."/>
            <person name="Jackson A.R."/>
            <person name="Kalafus K.J."/>
            <person name="McLeod M.P."/>
            <person name="Milosavljevic A."/>
            <person name="Virk D."/>
            <person name="Volkov A."/>
            <person name="Wheeler D.A."/>
            <person name="Zhang Z."/>
            <person name="Bailey J.A."/>
            <person name="Eichler E.E."/>
            <person name="Tuzun E."/>
            <person name="Birney E."/>
            <person name="Mongin E."/>
            <person name="Ureta-Vidal A."/>
            <person name="Woodwark C."/>
            <person name="Zdobnov E."/>
            <person name="Bork P."/>
            <person name="Suyama M."/>
            <person name="Torrents D."/>
            <person name="Alexandersson M."/>
            <person name="Trask B.J."/>
            <person name="Young J.M."/>
            <person name="Huang H."/>
            <person name="Wang H."/>
            <person name="Xing H."/>
            <person name="Daniels S."/>
            <person name="Gietzen D."/>
            <person name="Schmidt J."/>
            <person name="Stevens K."/>
            <person name="Vitt U."/>
            <person name="Wingrove J."/>
            <person name="Camara F."/>
            <person name="Mar Alba M."/>
            <person name="Abril J.F."/>
            <person name="Guigo R."/>
            <person name="Smit A."/>
            <person name="Dubchak I."/>
            <person name="Rubin E.M."/>
            <person name="Couronne O."/>
            <person name="Poliakov A."/>
            <person name="Huebner N."/>
            <person name="Ganten D."/>
            <person name="Goesele C."/>
            <person name="Hummel O."/>
            <person name="Kreitler T."/>
            <person name="Lee Y.-A."/>
            <person name="Monti J."/>
            <person name="Schulz H."/>
            <person name="Zimdahl H."/>
            <person name="Himmelbauer H."/>
            <person name="Lehrach H."/>
            <person name="Jacob H.J."/>
            <person name="Bromberg S."/>
            <person name="Gullings-Handley J."/>
            <person name="Jensen-Seaman M.I."/>
            <person name="Kwitek A.E."/>
            <person name="Lazar J."/>
            <person name="Pasko D."/>
            <person name="Tonellato P.J."/>
            <person name="Twigger S."/>
            <person name="Ponting C.P."/>
            <person name="Duarte J.M."/>
            <person name="Rice S."/>
            <person name="Goodstadt L."/>
            <person name="Beatson S.A."/>
            <person name="Emes R.D."/>
            <person name="Winter E.E."/>
            <person name="Webber C."/>
            <person name="Brandt P."/>
            <person name="Nyakatura G."/>
            <person name="Adetobi M."/>
            <person name="Chiaromonte F."/>
            <person name="Elnitski L."/>
            <person name="Eswara P."/>
            <person name="Hardison R.C."/>
            <person name="Hou M."/>
            <person name="Kolbe D."/>
            <person name="Makova K."/>
            <person name="Miller W."/>
            <person name="Nekrutenko A."/>
            <person name="Riemer C."/>
            <person name="Schwartz S."/>
            <person name="Taylor J."/>
            <person name="Yang S."/>
            <person name="Zhang Y."/>
            <person name="Lindpaintner K."/>
            <person name="Andrews T.D."/>
            <person name="Caccamo M."/>
            <person name="Clamp M."/>
            <person name="Clarke L."/>
            <person name="Curwen V."/>
            <person name="Durbin R.M."/>
            <person name="Eyras E."/>
            <person name="Searle S.M."/>
            <person name="Cooper G.M."/>
            <person name="Batzoglou S."/>
            <person name="Brudno M."/>
            <person name="Sidow A."/>
            <person name="Stone E.A."/>
            <person name="Payseur B.A."/>
            <person name="Bourque G."/>
            <person name="Lopez-Otin C."/>
            <person name="Puente X.S."/>
            <person name="Chakrabarti K."/>
            <person name="Chatterji S."/>
            <person name="Dewey C."/>
            <person name="Pachter L."/>
            <person name="Bray N."/>
            <person name="Yap V.B."/>
            <person name="Caspi A."/>
            <person name="Tesler G."/>
            <person name="Pevzner P.A."/>
            <person name="Haussler D."/>
            <person name="Roskin K.M."/>
            <person name="Baertsch R."/>
            <person name="Clawson H."/>
            <person name="Furey T.S."/>
            <person name="Hinrichs A.S."/>
            <person name="Karolchik D."/>
            <person name="Kent W.J."/>
            <person name="Rosenbloom K.R."/>
            <person name="Trumbower H."/>
            <person name="Weirauch M."/>
            <person name="Cooper D.N."/>
            <person name="Stenson P.D."/>
            <person name="Ma B."/>
            <person name="Brent M."/>
            <person name="Arumugam M."/>
            <person name="Shteynberg D."/>
            <person name="Copley R.R."/>
            <person name="Taylor M.S."/>
            <person name="Riethman H."/>
            <person name="Mudunuri U."/>
            <person name="Peterson J."/>
            <person name="Guyer M."/>
            <person name="Felsenfeld A."/>
            <person name="Old S."/>
            <person name="Mockrin S."/>
            <person name="Collins F.S."/>
        </authorList>
    </citation>
    <scope>NUCLEOTIDE SEQUENCE [LARGE SCALE GENOMIC DNA]</scope>
    <source>
        <strain>Brown Norway</strain>
    </source>
</reference>
<reference key="3">
    <citation type="journal article" date="2004" name="Genome Res.">
        <title>The status, quality, and expansion of the NIH full-length cDNA project: the Mammalian Gene Collection (MGC).</title>
        <authorList>
            <consortium name="The MGC Project Team"/>
        </authorList>
    </citation>
    <scope>NUCLEOTIDE SEQUENCE [LARGE SCALE MRNA]</scope>
    <source>
        <tissue>Lung</tissue>
    </source>
</reference>
<reference key="4">
    <citation type="journal article" date="2013" name="PLoS ONE">
        <title>Involvement of Rab28 in NF-kappaB nuclear transport in endothelial cells.</title>
        <authorList>
            <person name="Jiang J."/>
            <person name="Qi Y.X."/>
            <person name="Zhang P."/>
            <person name="Gu W.T."/>
            <person name="Yan Z.Q."/>
            <person name="Shen B.R."/>
            <person name="Yao Q.P."/>
            <person name="Kong H."/>
            <person name="Chien S."/>
            <person name="Jiang Z.L."/>
        </authorList>
    </citation>
    <scope>INTERACTION WITH RAB28</scope>
    <scope>SUBCELLULAR LOCATION</scope>
</reference>
<name>TF65_RAT</name>
<evidence type="ECO:0000250" key="1"/>
<evidence type="ECO:0000250" key="2">
    <source>
        <dbReference type="UniProtKB" id="Q04206"/>
    </source>
</evidence>
<evidence type="ECO:0000250" key="3">
    <source>
        <dbReference type="UniProtKB" id="Q04207"/>
    </source>
</evidence>
<evidence type="ECO:0000255" key="4"/>
<evidence type="ECO:0000255" key="5">
    <source>
        <dbReference type="PROSITE-ProRule" id="PRU00265"/>
    </source>
</evidence>
<evidence type="ECO:0000269" key="6">
    <source>
    </source>
</evidence>
<evidence type="ECO:0000312" key="7">
    <source>
        <dbReference type="RGD" id="727889"/>
    </source>
</evidence>
<dbReference type="EMBL" id="LC369719">
    <property type="protein sequence ID" value="BBC78048.1"/>
    <property type="molecule type" value="mRNA"/>
</dbReference>
<dbReference type="EMBL" id="AC134224">
    <property type="status" value="NOT_ANNOTATED_CDS"/>
    <property type="molecule type" value="Genomic_DNA"/>
</dbReference>
<dbReference type="EMBL" id="BC079457">
    <property type="protein sequence ID" value="AAH79457.1"/>
    <property type="molecule type" value="mRNA"/>
</dbReference>
<dbReference type="RefSeq" id="NP_954888.1">
    <property type="nucleotide sequence ID" value="NM_199267.2"/>
</dbReference>
<dbReference type="SMR" id="Q7TQN4"/>
<dbReference type="CORUM" id="Q7TQN4"/>
<dbReference type="DIP" id="DIP-38953N"/>
<dbReference type="IntAct" id="Q7TQN4">
    <property type="interactions" value="6"/>
</dbReference>
<dbReference type="MINT" id="Q7TQN4"/>
<dbReference type="STRING" id="10116.ENSRNOP00000044552"/>
<dbReference type="PhosphoSitePlus" id="Q7TQN4"/>
<dbReference type="PaxDb" id="10116-ENSRNOP00000044552"/>
<dbReference type="Ensembl" id="ENSRNOT00000100435.1">
    <property type="protein sequence ID" value="ENSRNOP00000080281.1"/>
    <property type="gene ID" value="ENSRNOG00000030888.5"/>
</dbReference>
<dbReference type="Ensembl" id="ENSRNOT00055037173">
    <property type="protein sequence ID" value="ENSRNOP00055030260"/>
    <property type="gene ID" value="ENSRNOG00055021686"/>
</dbReference>
<dbReference type="Ensembl" id="ENSRNOT00060053155">
    <property type="protein sequence ID" value="ENSRNOP00060044201"/>
    <property type="gene ID" value="ENSRNOG00060030556"/>
</dbReference>
<dbReference type="Ensembl" id="ENSRNOT00065058105">
    <property type="protein sequence ID" value="ENSRNOP00065047824"/>
    <property type="gene ID" value="ENSRNOG00065033822"/>
</dbReference>
<dbReference type="GeneID" id="309165"/>
<dbReference type="KEGG" id="rno:309165"/>
<dbReference type="UCSC" id="RGD:727889">
    <property type="organism name" value="rat"/>
</dbReference>
<dbReference type="AGR" id="RGD:727889"/>
<dbReference type="CTD" id="5970"/>
<dbReference type="RGD" id="727889">
    <property type="gene designation" value="Rela"/>
</dbReference>
<dbReference type="eggNOG" id="ENOG502QT4Z">
    <property type="taxonomic scope" value="Eukaryota"/>
</dbReference>
<dbReference type="GeneTree" id="ENSGT00940000159867"/>
<dbReference type="HOGENOM" id="CLU_004343_5_1_1"/>
<dbReference type="OrthoDB" id="31111at9989"/>
<dbReference type="TreeFam" id="TF325632"/>
<dbReference type="Proteomes" id="UP000002494">
    <property type="component" value="Chromosome 1"/>
</dbReference>
<dbReference type="Bgee" id="ENSRNOG00000030888">
    <property type="expression patterns" value="Expressed in lung and 18 other cell types or tissues"/>
</dbReference>
<dbReference type="GO" id="GO:0000785">
    <property type="term" value="C:chromatin"/>
    <property type="evidence" value="ECO:0000314"/>
    <property type="project" value="ParkinsonsUK-UCL"/>
</dbReference>
<dbReference type="GO" id="GO:0005737">
    <property type="term" value="C:cytoplasm"/>
    <property type="evidence" value="ECO:0000314"/>
    <property type="project" value="RGD"/>
</dbReference>
<dbReference type="GO" id="GO:0005829">
    <property type="term" value="C:cytosol"/>
    <property type="evidence" value="ECO:0000266"/>
    <property type="project" value="RGD"/>
</dbReference>
<dbReference type="GO" id="GO:0098978">
    <property type="term" value="C:glutamatergic synapse"/>
    <property type="evidence" value="ECO:0000266"/>
    <property type="project" value="RGD"/>
</dbReference>
<dbReference type="GO" id="GO:0071159">
    <property type="term" value="C:NF-kappaB complex"/>
    <property type="evidence" value="ECO:0000266"/>
    <property type="project" value="RGD"/>
</dbReference>
<dbReference type="GO" id="GO:0035525">
    <property type="term" value="C:NF-kappaB p50/p65 complex"/>
    <property type="evidence" value="ECO:0000266"/>
    <property type="project" value="RGD"/>
</dbReference>
<dbReference type="GO" id="GO:0005634">
    <property type="term" value="C:nucleus"/>
    <property type="evidence" value="ECO:0000314"/>
    <property type="project" value="BHF-UCL"/>
</dbReference>
<dbReference type="GO" id="GO:0032991">
    <property type="term" value="C:protein-containing complex"/>
    <property type="evidence" value="ECO:0000314"/>
    <property type="project" value="RGD"/>
</dbReference>
<dbReference type="GO" id="GO:0045202">
    <property type="term" value="C:synapse"/>
    <property type="evidence" value="ECO:0000314"/>
    <property type="project" value="SynGO"/>
</dbReference>
<dbReference type="GO" id="GO:0005667">
    <property type="term" value="C:transcription regulator complex"/>
    <property type="evidence" value="ECO:0000266"/>
    <property type="project" value="RGD"/>
</dbReference>
<dbReference type="GO" id="GO:0042805">
    <property type="term" value="F:actinin binding"/>
    <property type="evidence" value="ECO:0000266"/>
    <property type="project" value="RGD"/>
</dbReference>
<dbReference type="GO" id="GO:0071532">
    <property type="term" value="F:ankyrin repeat binding"/>
    <property type="evidence" value="ECO:0000266"/>
    <property type="project" value="RGD"/>
</dbReference>
<dbReference type="GO" id="GO:0003682">
    <property type="term" value="F:chromatin binding"/>
    <property type="evidence" value="ECO:0000266"/>
    <property type="project" value="RGD"/>
</dbReference>
<dbReference type="GO" id="GO:0031490">
    <property type="term" value="F:chromatin DNA binding"/>
    <property type="evidence" value="ECO:0000266"/>
    <property type="project" value="RGD"/>
</dbReference>
<dbReference type="GO" id="GO:0003677">
    <property type="term" value="F:DNA binding"/>
    <property type="evidence" value="ECO:0000266"/>
    <property type="project" value="RGD"/>
</dbReference>
<dbReference type="GO" id="GO:0001228">
    <property type="term" value="F:DNA-binding transcription activator activity, RNA polymerase II-specific"/>
    <property type="evidence" value="ECO:0000266"/>
    <property type="project" value="RGD"/>
</dbReference>
<dbReference type="GO" id="GO:0003700">
    <property type="term" value="F:DNA-binding transcription factor activity"/>
    <property type="evidence" value="ECO:0000266"/>
    <property type="project" value="RGD"/>
</dbReference>
<dbReference type="GO" id="GO:0000981">
    <property type="term" value="F:DNA-binding transcription factor activity, RNA polymerase II-specific"/>
    <property type="evidence" value="ECO:0000266"/>
    <property type="project" value="RGD"/>
</dbReference>
<dbReference type="GO" id="GO:0140297">
    <property type="term" value="F:DNA-binding transcription factor binding"/>
    <property type="evidence" value="ECO:0000266"/>
    <property type="project" value="RGD"/>
</dbReference>
<dbReference type="GO" id="GO:0001227">
    <property type="term" value="F:DNA-binding transcription repressor activity, RNA polymerase II-specific"/>
    <property type="evidence" value="ECO:0000266"/>
    <property type="project" value="RGD"/>
</dbReference>
<dbReference type="GO" id="GO:0003690">
    <property type="term" value="F:double-stranded DNA binding"/>
    <property type="evidence" value="ECO:0000314"/>
    <property type="project" value="RGD"/>
</dbReference>
<dbReference type="GO" id="GO:0019899">
    <property type="term" value="F:enzyme binding"/>
    <property type="evidence" value="ECO:0000266"/>
    <property type="project" value="RGD"/>
</dbReference>
<dbReference type="GO" id="GO:0140296">
    <property type="term" value="F:general transcription initiation factor binding"/>
    <property type="evidence" value="ECO:0000266"/>
    <property type="project" value="RGD"/>
</dbReference>
<dbReference type="GO" id="GO:0042826">
    <property type="term" value="F:histone deacetylase binding"/>
    <property type="evidence" value="ECO:0000266"/>
    <property type="project" value="RGD"/>
</dbReference>
<dbReference type="GO" id="GO:0042802">
    <property type="term" value="F:identical protein binding"/>
    <property type="evidence" value="ECO:0000266"/>
    <property type="project" value="RGD"/>
</dbReference>
<dbReference type="GO" id="GO:0051059">
    <property type="term" value="F:NF-kappaB binding"/>
    <property type="evidence" value="ECO:0000266"/>
    <property type="project" value="RGD"/>
</dbReference>
<dbReference type="GO" id="GO:0042277">
    <property type="term" value="F:peptide binding"/>
    <property type="evidence" value="ECO:0000266"/>
    <property type="project" value="RGD"/>
</dbReference>
<dbReference type="GO" id="GO:0042301">
    <property type="term" value="F:phosphate ion binding"/>
    <property type="evidence" value="ECO:0000266"/>
    <property type="project" value="RGD"/>
</dbReference>
<dbReference type="GO" id="GO:0042803">
    <property type="term" value="F:protein homodimerization activity"/>
    <property type="evidence" value="ECO:0000266"/>
    <property type="project" value="RGD"/>
</dbReference>
<dbReference type="GO" id="GO:0019901">
    <property type="term" value="F:protein kinase binding"/>
    <property type="evidence" value="ECO:0000266"/>
    <property type="project" value="RGD"/>
</dbReference>
<dbReference type="GO" id="GO:0044877">
    <property type="term" value="F:protein-containing complex binding"/>
    <property type="evidence" value="ECO:0000353"/>
    <property type="project" value="RGD"/>
</dbReference>
<dbReference type="GO" id="GO:0000978">
    <property type="term" value="F:RNA polymerase II cis-regulatory region sequence-specific DNA binding"/>
    <property type="evidence" value="ECO:0000314"/>
    <property type="project" value="ParkinsonsUK-UCL"/>
</dbReference>
<dbReference type="GO" id="GO:0000979">
    <property type="term" value="F:RNA polymerase II core promoter sequence-specific DNA binding"/>
    <property type="evidence" value="ECO:0000266"/>
    <property type="project" value="RGD"/>
</dbReference>
<dbReference type="GO" id="GO:0000977">
    <property type="term" value="F:RNA polymerase II transcription regulatory region sequence-specific DNA binding"/>
    <property type="evidence" value="ECO:0000266"/>
    <property type="project" value="RGD"/>
</dbReference>
<dbReference type="GO" id="GO:0043565">
    <property type="term" value="F:sequence-specific DNA binding"/>
    <property type="evidence" value="ECO:0000266"/>
    <property type="project" value="RGD"/>
</dbReference>
<dbReference type="GO" id="GO:0000976">
    <property type="term" value="F:transcription cis-regulatory region binding"/>
    <property type="evidence" value="ECO:0000266"/>
    <property type="project" value="RGD"/>
</dbReference>
<dbReference type="GO" id="GO:0001223">
    <property type="term" value="F:transcription coactivator binding"/>
    <property type="evidence" value="ECO:0000266"/>
    <property type="project" value="RGD"/>
</dbReference>
<dbReference type="GO" id="GO:0031625">
    <property type="term" value="F:ubiquitin protein ligase binding"/>
    <property type="evidence" value="ECO:0000266"/>
    <property type="project" value="RGD"/>
</dbReference>
<dbReference type="GO" id="GO:0009887">
    <property type="term" value="P:animal organ morphogenesis"/>
    <property type="evidence" value="ECO:0000266"/>
    <property type="project" value="RGD"/>
</dbReference>
<dbReference type="GO" id="GO:0140374">
    <property type="term" value="P:antiviral innate immune response"/>
    <property type="evidence" value="ECO:0000266"/>
    <property type="project" value="RGD"/>
</dbReference>
<dbReference type="GO" id="GO:0007249">
    <property type="term" value="P:canonical NF-kappaB signal transduction"/>
    <property type="evidence" value="ECO:0000266"/>
    <property type="project" value="RGD"/>
</dbReference>
<dbReference type="GO" id="GO:1904385">
    <property type="term" value="P:cellular response to angiotensin"/>
    <property type="evidence" value="ECO:0000266"/>
    <property type="project" value="RGD"/>
</dbReference>
<dbReference type="GO" id="GO:0035729">
    <property type="term" value="P:cellular response to hepatocyte growth factor stimulus"/>
    <property type="evidence" value="ECO:0000266"/>
    <property type="project" value="RGD"/>
</dbReference>
<dbReference type="GO" id="GO:0070301">
    <property type="term" value="P:cellular response to hydrogen peroxide"/>
    <property type="evidence" value="ECO:0000266"/>
    <property type="project" value="RGD"/>
</dbReference>
<dbReference type="GO" id="GO:0071347">
    <property type="term" value="P:cellular response to interleukin-1"/>
    <property type="evidence" value="ECO:0000266"/>
    <property type="project" value="RGD"/>
</dbReference>
<dbReference type="GO" id="GO:0071354">
    <property type="term" value="P:cellular response to interleukin-6"/>
    <property type="evidence" value="ECO:0000266"/>
    <property type="project" value="RGD"/>
</dbReference>
<dbReference type="GO" id="GO:0071222">
    <property type="term" value="P:cellular response to lipopolysaccharide"/>
    <property type="evidence" value="ECO:0000314"/>
    <property type="project" value="RGD"/>
</dbReference>
<dbReference type="GO" id="GO:0071223">
    <property type="term" value="P:cellular response to lipoteichoic acid"/>
    <property type="evidence" value="ECO:0000266"/>
    <property type="project" value="RGD"/>
</dbReference>
<dbReference type="GO" id="GO:0071316">
    <property type="term" value="P:cellular response to nicotine"/>
    <property type="evidence" value="ECO:0000266"/>
    <property type="project" value="RGD"/>
</dbReference>
<dbReference type="GO" id="GO:0071224">
    <property type="term" value="P:cellular response to peptidoglycan"/>
    <property type="evidence" value="ECO:0000266"/>
    <property type="project" value="RGD"/>
</dbReference>
<dbReference type="GO" id="GO:0071356">
    <property type="term" value="P:cellular response to tumor necrosis factor"/>
    <property type="evidence" value="ECO:0000314"/>
    <property type="project" value="RGD"/>
</dbReference>
<dbReference type="GO" id="GO:0006325">
    <property type="term" value="P:chromatin organization"/>
    <property type="evidence" value="ECO:0000266"/>
    <property type="project" value="RGD"/>
</dbReference>
<dbReference type="GO" id="GO:0019221">
    <property type="term" value="P:cytokine-mediated signaling pathway"/>
    <property type="evidence" value="ECO:0000266"/>
    <property type="project" value="RGD"/>
</dbReference>
<dbReference type="GO" id="GO:0006952">
    <property type="term" value="P:defense response"/>
    <property type="evidence" value="ECO:0000266"/>
    <property type="project" value="RGD"/>
</dbReference>
<dbReference type="GO" id="GO:0002357">
    <property type="term" value="P:defense response to tumor cell"/>
    <property type="evidence" value="ECO:0000266"/>
    <property type="project" value="RGD"/>
</dbReference>
<dbReference type="GO" id="GO:0006351">
    <property type="term" value="P:DNA-templated transcription"/>
    <property type="evidence" value="ECO:0000266"/>
    <property type="project" value="RGD"/>
</dbReference>
<dbReference type="GO" id="GO:0001942">
    <property type="term" value="P:hair follicle development"/>
    <property type="evidence" value="ECO:0000266"/>
    <property type="project" value="RGD"/>
</dbReference>
<dbReference type="GO" id="GO:0006954">
    <property type="term" value="P:inflammatory response"/>
    <property type="evidence" value="ECO:0000266"/>
    <property type="project" value="RGD"/>
</dbReference>
<dbReference type="GO" id="GO:0045087">
    <property type="term" value="P:innate immune response"/>
    <property type="evidence" value="ECO:0000318"/>
    <property type="project" value="GO_Central"/>
</dbReference>
<dbReference type="GO" id="GO:0070498">
    <property type="term" value="P:interleukin-1-mediated signaling pathway"/>
    <property type="evidence" value="ECO:0000266"/>
    <property type="project" value="RGD"/>
</dbReference>
<dbReference type="GO" id="GO:0035556">
    <property type="term" value="P:intracellular signal transduction"/>
    <property type="evidence" value="ECO:0000266"/>
    <property type="project" value="RGD"/>
</dbReference>
<dbReference type="GO" id="GO:0001889">
    <property type="term" value="P:liver development"/>
    <property type="evidence" value="ECO:0000266"/>
    <property type="project" value="RGD"/>
</dbReference>
<dbReference type="GO" id="GO:0016525">
    <property type="term" value="P:negative regulation of angiogenesis"/>
    <property type="evidence" value="ECO:0000266"/>
    <property type="project" value="RGD"/>
</dbReference>
<dbReference type="GO" id="GO:0043066">
    <property type="term" value="P:negative regulation of apoptotic process"/>
    <property type="evidence" value="ECO:0000266"/>
    <property type="project" value="RGD"/>
</dbReference>
<dbReference type="GO" id="GO:1900016">
    <property type="term" value="P:negative regulation of cytokine production involved in inflammatory response"/>
    <property type="evidence" value="ECO:0000266"/>
    <property type="project" value="RGD"/>
</dbReference>
<dbReference type="GO" id="GO:0045892">
    <property type="term" value="P:negative regulation of DNA-templated transcription"/>
    <property type="evidence" value="ECO:0000266"/>
    <property type="project" value="RGD"/>
</dbReference>
<dbReference type="GO" id="GO:2001237">
    <property type="term" value="P:negative regulation of extrinsic apoptotic signaling pathway"/>
    <property type="evidence" value="ECO:0000266"/>
    <property type="project" value="RGD"/>
</dbReference>
<dbReference type="GO" id="GO:0046627">
    <property type="term" value="P:negative regulation of insulin receptor signaling pathway"/>
    <property type="evidence" value="ECO:0000315"/>
    <property type="project" value="RGD"/>
</dbReference>
<dbReference type="GO" id="GO:1902894">
    <property type="term" value="P:negative regulation of miRNA transcription"/>
    <property type="evidence" value="ECO:0000266"/>
    <property type="project" value="RGD"/>
</dbReference>
<dbReference type="GO" id="GO:1901223">
    <property type="term" value="P:negative regulation of non-canonical NF-kappaB signal transduction"/>
    <property type="evidence" value="ECO:0000266"/>
    <property type="project" value="RGD"/>
</dbReference>
<dbReference type="GO" id="GO:0042177">
    <property type="term" value="P:negative regulation of protein catabolic process"/>
    <property type="evidence" value="ECO:0000266"/>
    <property type="project" value="RGD"/>
</dbReference>
<dbReference type="GO" id="GO:0033234">
    <property type="term" value="P:negative regulation of protein sumoylation"/>
    <property type="evidence" value="ECO:0000266"/>
    <property type="project" value="RGD"/>
</dbReference>
<dbReference type="GO" id="GO:0000122">
    <property type="term" value="P:negative regulation of transcription by RNA polymerase II"/>
    <property type="evidence" value="ECO:0000266"/>
    <property type="project" value="RGD"/>
</dbReference>
<dbReference type="GO" id="GO:0007218">
    <property type="term" value="P:neuropeptide signaling pathway"/>
    <property type="evidence" value="ECO:0000266"/>
    <property type="project" value="RGD"/>
</dbReference>
<dbReference type="GO" id="GO:0038061">
    <property type="term" value="P:non-canonical NF-kappaB signal transduction"/>
    <property type="evidence" value="ECO:0000266"/>
    <property type="project" value="RGD"/>
</dbReference>
<dbReference type="GO" id="GO:0070431">
    <property type="term" value="P:nucleotide-binding oligomerization domain containing 2 signaling pathway"/>
    <property type="evidence" value="ECO:0000266"/>
    <property type="project" value="RGD"/>
</dbReference>
<dbReference type="GO" id="GO:1902004">
    <property type="term" value="P:positive regulation of amyloid-beta formation"/>
    <property type="evidence" value="ECO:0000266"/>
    <property type="project" value="RGD"/>
</dbReference>
<dbReference type="GO" id="GO:0043123">
    <property type="term" value="P:positive regulation of canonical NF-kappaB signal transduction"/>
    <property type="evidence" value="ECO:0000266"/>
    <property type="project" value="RGD"/>
</dbReference>
<dbReference type="GO" id="GO:0008284">
    <property type="term" value="P:positive regulation of cell population proliferation"/>
    <property type="evidence" value="ECO:0000266"/>
    <property type="project" value="RGD"/>
</dbReference>
<dbReference type="GO" id="GO:0045893">
    <property type="term" value="P:positive regulation of DNA-templated transcription"/>
    <property type="evidence" value="ECO:0000266"/>
    <property type="project" value="RGD"/>
</dbReference>
<dbReference type="GO" id="GO:0010628">
    <property type="term" value="P:positive regulation of gene expression"/>
    <property type="evidence" value="ECO:0000266"/>
    <property type="project" value="RGD"/>
</dbReference>
<dbReference type="GO" id="GO:0032731">
    <property type="term" value="P:positive regulation of interleukin-1 beta production"/>
    <property type="evidence" value="ECO:0000266"/>
    <property type="project" value="RGD"/>
</dbReference>
<dbReference type="GO" id="GO:0032735">
    <property type="term" value="P:positive regulation of interleukin-12 production"/>
    <property type="evidence" value="ECO:0000266"/>
    <property type="project" value="RGD"/>
</dbReference>
<dbReference type="GO" id="GO:0032755">
    <property type="term" value="P:positive regulation of interleukin-6 production"/>
    <property type="evidence" value="ECO:0000266"/>
    <property type="project" value="RGD"/>
</dbReference>
<dbReference type="GO" id="GO:0032757">
    <property type="term" value="P:positive regulation of interleukin-8 production"/>
    <property type="evidence" value="ECO:0000266"/>
    <property type="project" value="RGD"/>
</dbReference>
<dbReference type="GO" id="GO:1904996">
    <property type="term" value="P:positive regulation of leukocyte adhesion to vascular endothelial cell"/>
    <property type="evidence" value="ECO:0000266"/>
    <property type="project" value="RGD"/>
</dbReference>
<dbReference type="GO" id="GO:2000630">
    <property type="term" value="P:positive regulation of miRNA metabolic process"/>
    <property type="evidence" value="ECO:0000266"/>
    <property type="project" value="RGD"/>
</dbReference>
<dbReference type="GO" id="GO:1902895">
    <property type="term" value="P:positive regulation of miRNA transcription"/>
    <property type="evidence" value="ECO:0000315"/>
    <property type="project" value="BHF-UCL"/>
</dbReference>
<dbReference type="GO" id="GO:1901224">
    <property type="term" value="P:positive regulation of non-canonical NF-kappaB signal transduction"/>
    <property type="evidence" value="ECO:0000266"/>
    <property type="project" value="RGD"/>
</dbReference>
<dbReference type="GO" id="GO:0014040">
    <property type="term" value="P:positive regulation of Schwann cell differentiation"/>
    <property type="evidence" value="ECO:0000315"/>
    <property type="project" value="RGD"/>
</dbReference>
<dbReference type="GO" id="GO:0050862">
    <property type="term" value="P:positive regulation of T cell receptor signaling pathway"/>
    <property type="evidence" value="ECO:0000266"/>
    <property type="project" value="RGD"/>
</dbReference>
<dbReference type="GO" id="GO:0045944">
    <property type="term" value="P:positive regulation of transcription by RNA polymerase II"/>
    <property type="evidence" value="ECO:0000266"/>
    <property type="project" value="RGD"/>
</dbReference>
<dbReference type="GO" id="GO:0010575">
    <property type="term" value="P:positive regulation of vascular endothelial growth factor production"/>
    <property type="evidence" value="ECO:0000266"/>
    <property type="project" value="RGD"/>
</dbReference>
<dbReference type="GO" id="GO:0099527">
    <property type="term" value="P:postsynapse to nucleus signaling pathway"/>
    <property type="evidence" value="ECO:0000266"/>
    <property type="project" value="RGD"/>
</dbReference>
<dbReference type="GO" id="GO:0038161">
    <property type="term" value="P:prolactin signaling pathway"/>
    <property type="evidence" value="ECO:0000266"/>
    <property type="project" value="RGD"/>
</dbReference>
<dbReference type="GO" id="GO:0030163">
    <property type="term" value="P:protein catabolic process"/>
    <property type="evidence" value="ECO:0000266"/>
    <property type="project" value="RGD"/>
</dbReference>
<dbReference type="GO" id="GO:0006355">
    <property type="term" value="P:regulation of DNA-templated transcription"/>
    <property type="evidence" value="ECO:0000266"/>
    <property type="project" value="RGD"/>
</dbReference>
<dbReference type="GO" id="GO:0050727">
    <property type="term" value="P:regulation of inflammatory response"/>
    <property type="evidence" value="ECO:0000266"/>
    <property type="project" value="RGD"/>
</dbReference>
<dbReference type="GO" id="GO:0006357">
    <property type="term" value="P:regulation of transcription by RNA polymerase II"/>
    <property type="evidence" value="ECO:0000266"/>
    <property type="project" value="RGD"/>
</dbReference>
<dbReference type="GO" id="GO:0043200">
    <property type="term" value="P:response to amino acid"/>
    <property type="evidence" value="ECO:0000270"/>
    <property type="project" value="RGD"/>
</dbReference>
<dbReference type="GO" id="GO:0009617">
    <property type="term" value="P:response to bacterium"/>
    <property type="evidence" value="ECO:0000266"/>
    <property type="project" value="RGD"/>
</dbReference>
<dbReference type="GO" id="GO:0051591">
    <property type="term" value="P:response to cAMP"/>
    <property type="evidence" value="ECO:0000270"/>
    <property type="project" value="RGD"/>
</dbReference>
<dbReference type="GO" id="GO:0033590">
    <property type="term" value="P:response to cobalamin"/>
    <property type="evidence" value="ECO:0000270"/>
    <property type="project" value="RGD"/>
</dbReference>
<dbReference type="GO" id="GO:0034097">
    <property type="term" value="P:response to cytokine"/>
    <property type="evidence" value="ECO:0000270"/>
    <property type="project" value="RGD"/>
</dbReference>
<dbReference type="GO" id="GO:0045471">
    <property type="term" value="P:response to ethanol"/>
    <property type="evidence" value="ECO:0000270"/>
    <property type="project" value="RGD"/>
</dbReference>
<dbReference type="GO" id="GO:0042542">
    <property type="term" value="P:response to hydrogen peroxide"/>
    <property type="evidence" value="ECO:0000270"/>
    <property type="project" value="RGD"/>
</dbReference>
<dbReference type="GO" id="GO:0032868">
    <property type="term" value="P:response to insulin"/>
    <property type="evidence" value="ECO:0000270"/>
    <property type="project" value="RGD"/>
</dbReference>
<dbReference type="GO" id="GO:0070555">
    <property type="term" value="P:response to interleukin-1"/>
    <property type="evidence" value="ECO:0000266"/>
    <property type="project" value="RGD"/>
</dbReference>
<dbReference type="GO" id="GO:0002931">
    <property type="term" value="P:response to ischemia"/>
    <property type="evidence" value="ECO:0000270"/>
    <property type="project" value="RGD"/>
</dbReference>
<dbReference type="GO" id="GO:0032496">
    <property type="term" value="P:response to lipopolysaccharide"/>
    <property type="evidence" value="ECO:0000270"/>
    <property type="project" value="RGD"/>
</dbReference>
<dbReference type="GO" id="GO:0009612">
    <property type="term" value="P:response to mechanical stimulus"/>
    <property type="evidence" value="ECO:0000270"/>
    <property type="project" value="RGD"/>
</dbReference>
<dbReference type="GO" id="GO:0043278">
    <property type="term" value="P:response to morphine"/>
    <property type="evidence" value="ECO:0000270"/>
    <property type="project" value="RGD"/>
</dbReference>
<dbReference type="GO" id="GO:0032495">
    <property type="term" value="P:response to muramyl dipeptide"/>
    <property type="evidence" value="ECO:0000266"/>
    <property type="project" value="RGD"/>
</dbReference>
<dbReference type="GO" id="GO:0035994">
    <property type="term" value="P:response to muscle stretch"/>
    <property type="evidence" value="ECO:0000266"/>
    <property type="project" value="RGD"/>
</dbReference>
<dbReference type="GO" id="GO:0032570">
    <property type="term" value="P:response to progesterone"/>
    <property type="evidence" value="ECO:0000270"/>
    <property type="project" value="RGD"/>
</dbReference>
<dbReference type="GO" id="GO:0010224">
    <property type="term" value="P:response to UV-B"/>
    <property type="evidence" value="ECO:0000266"/>
    <property type="project" value="RGD"/>
</dbReference>
<dbReference type="GO" id="GO:0009410">
    <property type="term" value="P:response to xenobiotic stimulus"/>
    <property type="evidence" value="ECO:0000270"/>
    <property type="project" value="RGD"/>
</dbReference>
<dbReference type="GO" id="GO:0023019">
    <property type="term" value="P:signal transduction involved in regulation of gene expression"/>
    <property type="evidence" value="ECO:0000266"/>
    <property type="project" value="RGD"/>
</dbReference>
<dbReference type="GO" id="GO:0034142">
    <property type="term" value="P:toll-like receptor 4 signaling pathway"/>
    <property type="evidence" value="ECO:0000266"/>
    <property type="project" value="RGD"/>
</dbReference>
<dbReference type="GO" id="GO:0038124">
    <property type="term" value="P:toll-like receptor TLR6:TLR2 signaling pathway"/>
    <property type="evidence" value="ECO:0000266"/>
    <property type="project" value="RGD"/>
</dbReference>
<dbReference type="GO" id="GO:0033209">
    <property type="term" value="P:tumor necrosis factor-mediated signaling pathway"/>
    <property type="evidence" value="ECO:0000266"/>
    <property type="project" value="RGD"/>
</dbReference>
<dbReference type="GO" id="GO:0038084">
    <property type="term" value="P:vascular endothelial growth factor signaling pathway"/>
    <property type="evidence" value="ECO:0000266"/>
    <property type="project" value="RGD"/>
</dbReference>
<dbReference type="CDD" id="cd01177">
    <property type="entry name" value="IPT_NFkappaB"/>
    <property type="match status" value="1"/>
</dbReference>
<dbReference type="CDD" id="cd07885">
    <property type="entry name" value="RHD-n_RelA"/>
    <property type="match status" value="1"/>
</dbReference>
<dbReference type="FunFam" id="2.60.40.340:FF:000003">
    <property type="entry name" value="NFkB p65 transcription factor"/>
    <property type="match status" value="1"/>
</dbReference>
<dbReference type="FunFam" id="2.60.40.10:FF:000046">
    <property type="entry name" value="Nuclear factor NF-kappa-B p105 subunit"/>
    <property type="match status" value="1"/>
</dbReference>
<dbReference type="Gene3D" id="2.60.40.10">
    <property type="entry name" value="Immunoglobulins"/>
    <property type="match status" value="1"/>
</dbReference>
<dbReference type="Gene3D" id="2.60.40.340">
    <property type="entry name" value="Rel homology domain (RHD), DNA-binding domain"/>
    <property type="match status" value="1"/>
</dbReference>
<dbReference type="InterPro" id="IPR013783">
    <property type="entry name" value="Ig-like_fold"/>
</dbReference>
<dbReference type="InterPro" id="IPR014756">
    <property type="entry name" value="Ig_E-set"/>
</dbReference>
<dbReference type="InterPro" id="IPR002909">
    <property type="entry name" value="IPT_dom"/>
</dbReference>
<dbReference type="InterPro" id="IPR033926">
    <property type="entry name" value="IPT_NFkappaB"/>
</dbReference>
<dbReference type="InterPro" id="IPR000451">
    <property type="entry name" value="NFkB/Dor"/>
</dbReference>
<dbReference type="InterPro" id="IPR008967">
    <property type="entry name" value="p53-like_TF_DNA-bd_sf"/>
</dbReference>
<dbReference type="InterPro" id="IPR030495">
    <property type="entry name" value="RelA_RHD_N"/>
</dbReference>
<dbReference type="InterPro" id="IPR030492">
    <property type="entry name" value="RHD_CS"/>
</dbReference>
<dbReference type="InterPro" id="IPR032397">
    <property type="entry name" value="RHD_dimer"/>
</dbReference>
<dbReference type="InterPro" id="IPR011539">
    <property type="entry name" value="RHD_DNA_bind_dom"/>
</dbReference>
<dbReference type="InterPro" id="IPR037059">
    <property type="entry name" value="RHD_DNA_bind_dom_sf"/>
</dbReference>
<dbReference type="PANTHER" id="PTHR24169">
    <property type="entry name" value="NUCLEAR FACTOR NF-KAPPA-B PROTEIN"/>
    <property type="match status" value="1"/>
</dbReference>
<dbReference type="PANTHER" id="PTHR24169:SF1">
    <property type="entry name" value="TRANSCRIPTION FACTOR P65"/>
    <property type="match status" value="1"/>
</dbReference>
<dbReference type="Pfam" id="PF16179">
    <property type="entry name" value="RHD_dimer"/>
    <property type="match status" value="1"/>
</dbReference>
<dbReference type="Pfam" id="PF00554">
    <property type="entry name" value="RHD_DNA_bind"/>
    <property type="match status" value="1"/>
</dbReference>
<dbReference type="PRINTS" id="PR00057">
    <property type="entry name" value="NFKBTNSCPFCT"/>
</dbReference>
<dbReference type="SMART" id="SM00429">
    <property type="entry name" value="IPT"/>
    <property type="match status" value="1"/>
</dbReference>
<dbReference type="SUPFAM" id="SSF81296">
    <property type="entry name" value="E set domains"/>
    <property type="match status" value="1"/>
</dbReference>
<dbReference type="SUPFAM" id="SSF49417">
    <property type="entry name" value="p53-like transcription factors"/>
    <property type="match status" value="1"/>
</dbReference>
<dbReference type="PROSITE" id="PS01204">
    <property type="entry name" value="REL_1"/>
    <property type="match status" value="1"/>
</dbReference>
<dbReference type="PROSITE" id="PS50254">
    <property type="entry name" value="REL_2"/>
    <property type="match status" value="1"/>
</dbReference>
<protein>
    <recommendedName>
        <fullName>Transcription factor p65</fullName>
    </recommendedName>
    <alternativeName>
        <fullName>Nuclear factor NF-kappa-B p65 subunit</fullName>
    </alternativeName>
</protein>
<accession>Q7TQN4</accession>
<keyword id="KW-0007">Acetylation</keyword>
<keyword id="KW-0963">Cytoplasm</keyword>
<keyword id="KW-1017">Isopeptide bond</keyword>
<keyword id="KW-0488">Methylation</keyword>
<keyword id="KW-0539">Nucleus</keyword>
<keyword id="KW-0597">Phosphoprotein</keyword>
<keyword id="KW-1185">Reference proteome</keyword>
<keyword id="KW-0702">S-nitrosylation</keyword>
<keyword id="KW-0804">Transcription</keyword>
<keyword id="KW-0805">Transcription regulation</keyword>
<keyword id="KW-0832">Ubl conjugation</keyword>